<dbReference type="EMBL" id="CP000158">
    <property type="protein sequence ID" value="ABI78665.1"/>
    <property type="molecule type" value="Genomic_DNA"/>
</dbReference>
<dbReference type="RefSeq" id="WP_011647804.1">
    <property type="nucleotide sequence ID" value="NC_008358.1"/>
</dbReference>
<dbReference type="SMR" id="Q0BYD6"/>
<dbReference type="STRING" id="228405.HNE_2829"/>
<dbReference type="KEGG" id="hne:HNE_2829"/>
<dbReference type="eggNOG" id="COG0099">
    <property type="taxonomic scope" value="Bacteria"/>
</dbReference>
<dbReference type="HOGENOM" id="CLU_103849_1_2_5"/>
<dbReference type="Proteomes" id="UP000001959">
    <property type="component" value="Chromosome"/>
</dbReference>
<dbReference type="GO" id="GO:0005829">
    <property type="term" value="C:cytosol"/>
    <property type="evidence" value="ECO:0007669"/>
    <property type="project" value="TreeGrafter"/>
</dbReference>
<dbReference type="GO" id="GO:0015935">
    <property type="term" value="C:small ribosomal subunit"/>
    <property type="evidence" value="ECO:0007669"/>
    <property type="project" value="TreeGrafter"/>
</dbReference>
<dbReference type="GO" id="GO:0019843">
    <property type="term" value="F:rRNA binding"/>
    <property type="evidence" value="ECO:0007669"/>
    <property type="project" value="UniProtKB-UniRule"/>
</dbReference>
<dbReference type="GO" id="GO:0003735">
    <property type="term" value="F:structural constituent of ribosome"/>
    <property type="evidence" value="ECO:0007669"/>
    <property type="project" value="InterPro"/>
</dbReference>
<dbReference type="GO" id="GO:0000049">
    <property type="term" value="F:tRNA binding"/>
    <property type="evidence" value="ECO:0007669"/>
    <property type="project" value="UniProtKB-UniRule"/>
</dbReference>
<dbReference type="GO" id="GO:0006412">
    <property type="term" value="P:translation"/>
    <property type="evidence" value="ECO:0007669"/>
    <property type="project" value="UniProtKB-UniRule"/>
</dbReference>
<dbReference type="FunFam" id="1.10.8.50:FF:000001">
    <property type="entry name" value="30S ribosomal protein S13"/>
    <property type="match status" value="1"/>
</dbReference>
<dbReference type="FunFam" id="4.10.910.10:FF:000001">
    <property type="entry name" value="30S ribosomal protein S13"/>
    <property type="match status" value="1"/>
</dbReference>
<dbReference type="Gene3D" id="1.10.8.50">
    <property type="match status" value="1"/>
</dbReference>
<dbReference type="Gene3D" id="4.10.910.10">
    <property type="entry name" value="30s ribosomal protein s13, domain 2"/>
    <property type="match status" value="1"/>
</dbReference>
<dbReference type="HAMAP" id="MF_01315">
    <property type="entry name" value="Ribosomal_uS13"/>
    <property type="match status" value="1"/>
</dbReference>
<dbReference type="InterPro" id="IPR027437">
    <property type="entry name" value="Rbsml_uS13_C"/>
</dbReference>
<dbReference type="InterPro" id="IPR001892">
    <property type="entry name" value="Ribosomal_uS13"/>
</dbReference>
<dbReference type="InterPro" id="IPR010979">
    <property type="entry name" value="Ribosomal_uS13-like_H2TH"/>
</dbReference>
<dbReference type="InterPro" id="IPR019980">
    <property type="entry name" value="Ribosomal_uS13_bac-type"/>
</dbReference>
<dbReference type="InterPro" id="IPR018269">
    <property type="entry name" value="Ribosomal_uS13_CS"/>
</dbReference>
<dbReference type="NCBIfam" id="TIGR03631">
    <property type="entry name" value="uS13_bact"/>
    <property type="match status" value="1"/>
</dbReference>
<dbReference type="PANTHER" id="PTHR10871">
    <property type="entry name" value="30S RIBOSOMAL PROTEIN S13/40S RIBOSOMAL PROTEIN S18"/>
    <property type="match status" value="1"/>
</dbReference>
<dbReference type="PANTHER" id="PTHR10871:SF1">
    <property type="entry name" value="SMALL RIBOSOMAL SUBUNIT PROTEIN US13M"/>
    <property type="match status" value="1"/>
</dbReference>
<dbReference type="Pfam" id="PF00416">
    <property type="entry name" value="Ribosomal_S13"/>
    <property type="match status" value="1"/>
</dbReference>
<dbReference type="PIRSF" id="PIRSF002134">
    <property type="entry name" value="Ribosomal_S13"/>
    <property type="match status" value="1"/>
</dbReference>
<dbReference type="SUPFAM" id="SSF46946">
    <property type="entry name" value="S13-like H2TH domain"/>
    <property type="match status" value="1"/>
</dbReference>
<dbReference type="PROSITE" id="PS00646">
    <property type="entry name" value="RIBOSOMAL_S13_1"/>
    <property type="match status" value="1"/>
</dbReference>
<dbReference type="PROSITE" id="PS50159">
    <property type="entry name" value="RIBOSOMAL_S13_2"/>
    <property type="match status" value="1"/>
</dbReference>
<accession>Q0BYD6</accession>
<gene>
    <name evidence="1" type="primary">rpsM</name>
    <name type="ordered locus">HNE_2829</name>
</gene>
<sequence length="122" mass="13775">MARIAGVNIPTNKRVEIALRYIHGIGPSFSKEICEKVGVEPSRRVNQLTDAEVIKIREAIDAGYMVEGDLRRDTSMNIKRLMDLGCYRGLRHRKKLPVRGQRTHTNARTRKGPAKPIAGKKK</sequence>
<name>RS13_HYPNA</name>
<keyword id="KW-1185">Reference proteome</keyword>
<keyword id="KW-0687">Ribonucleoprotein</keyword>
<keyword id="KW-0689">Ribosomal protein</keyword>
<keyword id="KW-0694">RNA-binding</keyword>
<keyword id="KW-0699">rRNA-binding</keyword>
<keyword id="KW-0820">tRNA-binding</keyword>
<reference key="1">
    <citation type="journal article" date="2006" name="J. Bacteriol.">
        <title>Comparative genomic evidence for a close relationship between the dimorphic prosthecate bacteria Hyphomonas neptunium and Caulobacter crescentus.</title>
        <authorList>
            <person name="Badger J.H."/>
            <person name="Hoover T.R."/>
            <person name="Brun Y.V."/>
            <person name="Weiner R.M."/>
            <person name="Laub M.T."/>
            <person name="Alexandre G."/>
            <person name="Mrazek J."/>
            <person name="Ren Q."/>
            <person name="Paulsen I.T."/>
            <person name="Nelson K.E."/>
            <person name="Khouri H.M."/>
            <person name="Radune D."/>
            <person name="Sosa J."/>
            <person name="Dodson R.J."/>
            <person name="Sullivan S.A."/>
            <person name="Rosovitz M.J."/>
            <person name="Madupu R."/>
            <person name="Brinkac L.M."/>
            <person name="Durkin A.S."/>
            <person name="Daugherty S.C."/>
            <person name="Kothari S.P."/>
            <person name="Giglio M.G."/>
            <person name="Zhou L."/>
            <person name="Haft D.H."/>
            <person name="Selengut J.D."/>
            <person name="Davidsen T.M."/>
            <person name="Yang Q."/>
            <person name="Zafar N."/>
            <person name="Ward N.L."/>
        </authorList>
    </citation>
    <scope>NUCLEOTIDE SEQUENCE [LARGE SCALE GENOMIC DNA]</scope>
    <source>
        <strain>ATCC 15444</strain>
    </source>
</reference>
<organism>
    <name type="scientific">Hyphomonas neptunium (strain ATCC 15444)</name>
    <dbReference type="NCBI Taxonomy" id="228405"/>
    <lineage>
        <taxon>Bacteria</taxon>
        <taxon>Pseudomonadati</taxon>
        <taxon>Pseudomonadota</taxon>
        <taxon>Alphaproteobacteria</taxon>
        <taxon>Hyphomonadales</taxon>
        <taxon>Hyphomonadaceae</taxon>
        <taxon>Hyphomonas</taxon>
    </lineage>
</organism>
<comment type="function">
    <text evidence="1">Located at the top of the head of the 30S subunit, it contacts several helices of the 16S rRNA. In the 70S ribosome it contacts the 23S rRNA (bridge B1a) and protein L5 of the 50S subunit (bridge B1b), connecting the 2 subunits; these bridges are implicated in subunit movement. Contacts the tRNAs in the A and P-sites.</text>
</comment>
<comment type="subunit">
    <text evidence="1">Part of the 30S ribosomal subunit. Forms a loose heterodimer with protein S19. Forms two bridges to the 50S subunit in the 70S ribosome.</text>
</comment>
<comment type="similarity">
    <text evidence="1">Belongs to the universal ribosomal protein uS13 family.</text>
</comment>
<evidence type="ECO:0000255" key="1">
    <source>
        <dbReference type="HAMAP-Rule" id="MF_01315"/>
    </source>
</evidence>
<evidence type="ECO:0000256" key="2">
    <source>
        <dbReference type="SAM" id="MobiDB-lite"/>
    </source>
</evidence>
<evidence type="ECO:0000305" key="3"/>
<feature type="chain" id="PRO_0000306622" description="Small ribosomal subunit protein uS13">
    <location>
        <begin position="1"/>
        <end position="122"/>
    </location>
</feature>
<feature type="region of interest" description="Disordered" evidence="2">
    <location>
        <begin position="94"/>
        <end position="122"/>
    </location>
</feature>
<proteinExistence type="inferred from homology"/>
<protein>
    <recommendedName>
        <fullName evidence="1">Small ribosomal subunit protein uS13</fullName>
    </recommendedName>
    <alternativeName>
        <fullName evidence="3">30S ribosomal protein S13</fullName>
    </alternativeName>
</protein>